<accession>Q5PBI8</accession>
<reference key="1">
    <citation type="journal article" date="2005" name="Proc. Natl. Acad. Sci. U.S.A.">
        <title>Complete genome sequencing of Anaplasma marginale reveals that the surface is skewed to two superfamilies of outer membrane proteins.</title>
        <authorList>
            <person name="Brayton K.A."/>
            <person name="Kappmeyer L.S."/>
            <person name="Herndon D.R."/>
            <person name="Dark M.J."/>
            <person name="Tibbals D.L."/>
            <person name="Palmer G.H."/>
            <person name="McGuire T.C."/>
            <person name="Knowles D.P. Jr."/>
        </authorList>
    </citation>
    <scope>NUCLEOTIDE SEQUENCE [LARGE SCALE GENOMIC DNA]</scope>
    <source>
        <strain>St. Maries</strain>
    </source>
</reference>
<feature type="chain" id="PRO_0000102815" description="Succinate--CoA ligase [ADP-forming] subunit beta">
    <location>
        <begin position="1"/>
        <end position="388"/>
    </location>
</feature>
<feature type="domain" description="ATP-grasp" evidence="1">
    <location>
        <begin position="9"/>
        <end position="244"/>
    </location>
</feature>
<feature type="binding site" evidence="1">
    <location>
        <position position="46"/>
    </location>
    <ligand>
        <name>ATP</name>
        <dbReference type="ChEBI" id="CHEBI:30616"/>
    </ligand>
</feature>
<feature type="binding site" evidence="1">
    <location>
        <begin position="53"/>
        <end position="55"/>
    </location>
    <ligand>
        <name>ATP</name>
        <dbReference type="ChEBI" id="CHEBI:30616"/>
    </ligand>
</feature>
<feature type="binding site" evidence="1">
    <location>
        <position position="99"/>
    </location>
    <ligand>
        <name>ATP</name>
        <dbReference type="ChEBI" id="CHEBI:30616"/>
    </ligand>
</feature>
<feature type="binding site" evidence="1">
    <location>
        <position position="102"/>
    </location>
    <ligand>
        <name>ATP</name>
        <dbReference type="ChEBI" id="CHEBI:30616"/>
    </ligand>
</feature>
<feature type="binding site" evidence="1">
    <location>
        <position position="107"/>
    </location>
    <ligand>
        <name>ATP</name>
        <dbReference type="ChEBI" id="CHEBI:30616"/>
    </ligand>
</feature>
<feature type="binding site" evidence="1">
    <location>
        <position position="199"/>
    </location>
    <ligand>
        <name>Mg(2+)</name>
        <dbReference type="ChEBI" id="CHEBI:18420"/>
    </ligand>
</feature>
<feature type="binding site" evidence="1">
    <location>
        <position position="213"/>
    </location>
    <ligand>
        <name>Mg(2+)</name>
        <dbReference type="ChEBI" id="CHEBI:18420"/>
    </ligand>
</feature>
<feature type="binding site" evidence="1">
    <location>
        <position position="264"/>
    </location>
    <ligand>
        <name>substrate</name>
        <note>ligand shared with subunit alpha</note>
    </ligand>
</feature>
<feature type="binding site" evidence="1">
    <location>
        <begin position="320"/>
        <end position="322"/>
    </location>
    <ligand>
        <name>substrate</name>
        <note>ligand shared with subunit alpha</note>
    </ligand>
</feature>
<organism>
    <name type="scientific">Anaplasma marginale (strain St. Maries)</name>
    <dbReference type="NCBI Taxonomy" id="234826"/>
    <lineage>
        <taxon>Bacteria</taxon>
        <taxon>Pseudomonadati</taxon>
        <taxon>Pseudomonadota</taxon>
        <taxon>Alphaproteobacteria</taxon>
        <taxon>Rickettsiales</taxon>
        <taxon>Anaplasmataceae</taxon>
        <taxon>Anaplasma</taxon>
    </lineage>
</organism>
<proteinExistence type="inferred from homology"/>
<gene>
    <name evidence="1" type="primary">sucC</name>
    <name type="ordered locus">AM231</name>
</gene>
<protein>
    <recommendedName>
        <fullName evidence="1">Succinate--CoA ligase [ADP-forming] subunit beta</fullName>
        <ecNumber evidence="1">6.2.1.5</ecNumber>
    </recommendedName>
    <alternativeName>
        <fullName evidence="1">Succinyl-CoA synthetase subunit beta</fullName>
        <shortName evidence="1">SCS-beta</shortName>
    </alternativeName>
</protein>
<comment type="function">
    <text evidence="1">Succinyl-CoA synthetase functions in the citric acid cycle (TCA), coupling the hydrolysis of succinyl-CoA to the synthesis of either ATP or GTP and thus represents the only step of substrate-level phosphorylation in the TCA. The beta subunit provides nucleotide specificity of the enzyme and binds the substrate succinate, while the binding sites for coenzyme A and phosphate are found in the alpha subunit.</text>
</comment>
<comment type="catalytic activity">
    <reaction evidence="1">
        <text>succinate + ATP + CoA = succinyl-CoA + ADP + phosphate</text>
        <dbReference type="Rhea" id="RHEA:17661"/>
        <dbReference type="ChEBI" id="CHEBI:30031"/>
        <dbReference type="ChEBI" id="CHEBI:30616"/>
        <dbReference type="ChEBI" id="CHEBI:43474"/>
        <dbReference type="ChEBI" id="CHEBI:57287"/>
        <dbReference type="ChEBI" id="CHEBI:57292"/>
        <dbReference type="ChEBI" id="CHEBI:456216"/>
        <dbReference type="EC" id="6.2.1.5"/>
    </reaction>
    <physiologicalReaction direction="right-to-left" evidence="1">
        <dbReference type="Rhea" id="RHEA:17663"/>
    </physiologicalReaction>
</comment>
<comment type="catalytic activity">
    <reaction evidence="1">
        <text>GTP + succinate + CoA = succinyl-CoA + GDP + phosphate</text>
        <dbReference type="Rhea" id="RHEA:22120"/>
        <dbReference type="ChEBI" id="CHEBI:30031"/>
        <dbReference type="ChEBI" id="CHEBI:37565"/>
        <dbReference type="ChEBI" id="CHEBI:43474"/>
        <dbReference type="ChEBI" id="CHEBI:57287"/>
        <dbReference type="ChEBI" id="CHEBI:57292"/>
        <dbReference type="ChEBI" id="CHEBI:58189"/>
    </reaction>
    <physiologicalReaction direction="right-to-left" evidence="1">
        <dbReference type="Rhea" id="RHEA:22122"/>
    </physiologicalReaction>
</comment>
<comment type="cofactor">
    <cofactor evidence="1">
        <name>Mg(2+)</name>
        <dbReference type="ChEBI" id="CHEBI:18420"/>
    </cofactor>
    <text evidence="1">Binds 1 Mg(2+) ion per subunit.</text>
</comment>
<comment type="pathway">
    <text evidence="1">Carbohydrate metabolism; tricarboxylic acid cycle; succinate from succinyl-CoA (ligase route): step 1/1.</text>
</comment>
<comment type="subunit">
    <text evidence="1">Heterotetramer of two alpha and two beta subunits.</text>
</comment>
<comment type="similarity">
    <text evidence="1">Belongs to the succinate/malate CoA ligase beta subunit family.</text>
</comment>
<keyword id="KW-0067">ATP-binding</keyword>
<keyword id="KW-0436">Ligase</keyword>
<keyword id="KW-0460">Magnesium</keyword>
<keyword id="KW-0479">Metal-binding</keyword>
<keyword id="KW-0547">Nucleotide-binding</keyword>
<keyword id="KW-0816">Tricarboxylic acid cycle</keyword>
<name>SUCC_ANAMM</name>
<dbReference type="EC" id="6.2.1.5" evidence="1"/>
<dbReference type="EMBL" id="CP000030">
    <property type="protein sequence ID" value="AAV86341.1"/>
    <property type="molecule type" value="Genomic_DNA"/>
</dbReference>
<dbReference type="RefSeq" id="WP_010267152.1">
    <property type="nucleotide sequence ID" value="NZ_AFMU01000015.1"/>
</dbReference>
<dbReference type="SMR" id="Q5PBI8"/>
<dbReference type="GeneID" id="7398624"/>
<dbReference type="KEGG" id="ama:AM231"/>
<dbReference type="PATRIC" id="fig|320483.3.peg.195"/>
<dbReference type="HOGENOM" id="CLU_037430_0_2_5"/>
<dbReference type="UniPathway" id="UPA00223">
    <property type="reaction ID" value="UER00999"/>
</dbReference>
<dbReference type="GO" id="GO:0005829">
    <property type="term" value="C:cytosol"/>
    <property type="evidence" value="ECO:0007669"/>
    <property type="project" value="TreeGrafter"/>
</dbReference>
<dbReference type="GO" id="GO:0042709">
    <property type="term" value="C:succinate-CoA ligase complex"/>
    <property type="evidence" value="ECO:0007669"/>
    <property type="project" value="TreeGrafter"/>
</dbReference>
<dbReference type="GO" id="GO:0005524">
    <property type="term" value="F:ATP binding"/>
    <property type="evidence" value="ECO:0007669"/>
    <property type="project" value="UniProtKB-UniRule"/>
</dbReference>
<dbReference type="GO" id="GO:0000287">
    <property type="term" value="F:magnesium ion binding"/>
    <property type="evidence" value="ECO:0007669"/>
    <property type="project" value="UniProtKB-UniRule"/>
</dbReference>
<dbReference type="GO" id="GO:0004775">
    <property type="term" value="F:succinate-CoA ligase (ADP-forming) activity"/>
    <property type="evidence" value="ECO:0007669"/>
    <property type="project" value="UniProtKB-UniRule"/>
</dbReference>
<dbReference type="GO" id="GO:0004776">
    <property type="term" value="F:succinate-CoA ligase (GDP-forming) activity"/>
    <property type="evidence" value="ECO:0007669"/>
    <property type="project" value="RHEA"/>
</dbReference>
<dbReference type="GO" id="GO:0006104">
    <property type="term" value="P:succinyl-CoA metabolic process"/>
    <property type="evidence" value="ECO:0007669"/>
    <property type="project" value="TreeGrafter"/>
</dbReference>
<dbReference type="GO" id="GO:0006099">
    <property type="term" value="P:tricarboxylic acid cycle"/>
    <property type="evidence" value="ECO:0007669"/>
    <property type="project" value="UniProtKB-UniRule"/>
</dbReference>
<dbReference type="FunFam" id="3.30.1490.20:FF:000002">
    <property type="entry name" value="Succinate--CoA ligase [ADP-forming] subunit beta"/>
    <property type="match status" value="1"/>
</dbReference>
<dbReference type="FunFam" id="3.30.470.20:FF:000002">
    <property type="entry name" value="Succinate--CoA ligase [ADP-forming] subunit beta"/>
    <property type="match status" value="1"/>
</dbReference>
<dbReference type="FunFam" id="3.40.50.261:FF:000001">
    <property type="entry name" value="Succinate--CoA ligase [ADP-forming] subunit beta"/>
    <property type="match status" value="1"/>
</dbReference>
<dbReference type="Gene3D" id="3.30.1490.20">
    <property type="entry name" value="ATP-grasp fold, A domain"/>
    <property type="match status" value="1"/>
</dbReference>
<dbReference type="Gene3D" id="3.30.470.20">
    <property type="entry name" value="ATP-grasp fold, B domain"/>
    <property type="match status" value="1"/>
</dbReference>
<dbReference type="Gene3D" id="3.40.50.261">
    <property type="entry name" value="Succinyl-CoA synthetase domains"/>
    <property type="match status" value="1"/>
</dbReference>
<dbReference type="HAMAP" id="MF_00558">
    <property type="entry name" value="Succ_CoA_beta"/>
    <property type="match status" value="1"/>
</dbReference>
<dbReference type="InterPro" id="IPR013650">
    <property type="entry name" value="ATP-grasp_succ-CoA_synth-type"/>
</dbReference>
<dbReference type="InterPro" id="IPR013815">
    <property type="entry name" value="ATP_grasp_subdomain_1"/>
</dbReference>
<dbReference type="InterPro" id="IPR017866">
    <property type="entry name" value="Succ-CoA_synthase_bsu_CS"/>
</dbReference>
<dbReference type="InterPro" id="IPR005811">
    <property type="entry name" value="SUCC_ACL_C"/>
</dbReference>
<dbReference type="InterPro" id="IPR005809">
    <property type="entry name" value="Succ_CoA_ligase-like_bsu"/>
</dbReference>
<dbReference type="InterPro" id="IPR016102">
    <property type="entry name" value="Succinyl-CoA_synth-like"/>
</dbReference>
<dbReference type="NCBIfam" id="NF001913">
    <property type="entry name" value="PRK00696.1"/>
    <property type="match status" value="1"/>
</dbReference>
<dbReference type="NCBIfam" id="TIGR01016">
    <property type="entry name" value="sucCoAbeta"/>
    <property type="match status" value="1"/>
</dbReference>
<dbReference type="PANTHER" id="PTHR11815:SF10">
    <property type="entry name" value="SUCCINATE--COA LIGASE [GDP-FORMING] SUBUNIT BETA, MITOCHONDRIAL"/>
    <property type="match status" value="1"/>
</dbReference>
<dbReference type="PANTHER" id="PTHR11815">
    <property type="entry name" value="SUCCINYL-COA SYNTHETASE BETA CHAIN"/>
    <property type="match status" value="1"/>
</dbReference>
<dbReference type="Pfam" id="PF08442">
    <property type="entry name" value="ATP-grasp_2"/>
    <property type="match status" value="1"/>
</dbReference>
<dbReference type="Pfam" id="PF00549">
    <property type="entry name" value="Ligase_CoA"/>
    <property type="match status" value="1"/>
</dbReference>
<dbReference type="PIRSF" id="PIRSF001554">
    <property type="entry name" value="SucCS_beta"/>
    <property type="match status" value="1"/>
</dbReference>
<dbReference type="SUPFAM" id="SSF56059">
    <property type="entry name" value="Glutathione synthetase ATP-binding domain-like"/>
    <property type="match status" value="1"/>
</dbReference>
<dbReference type="SUPFAM" id="SSF52210">
    <property type="entry name" value="Succinyl-CoA synthetase domains"/>
    <property type="match status" value="1"/>
</dbReference>
<dbReference type="PROSITE" id="PS01217">
    <property type="entry name" value="SUCCINYL_COA_LIG_3"/>
    <property type="match status" value="1"/>
</dbReference>
<sequence length="388" mass="41627">MNVHEFQAKGVLSSFGVTVPRGVVVESVEEVDRLLGDLAPGLVAVKAQIHAGGRGKAGGVKIGKTKDEVKSLVKQMLHSVLITHQTSPEGQKVNKVYLEEGVDIGKEYYISAVVDRSVGRVSIIFSSEGGVDIETVAKERPNMVSVVHVDPLYGFRSFHGQELCRRFGLGPKQVSGVVSMARKIYKVLVETDASQVEINPMAETSSGEFLALDAKIAFDDNGLYRNPEIAKLQDPDEYAAEELEAAKHGLSYIKMDGNIGCMVNGAGLAMATMDIIKYYGGEPANFLDVGGGANQEAVREAFKIILQSGVKGILVNIFGGIMRCDVIAKGIIESTKEIGVDVPLVVRLSGTNFEIGRKLLDDSGLGITAAADLDEAASFIVKMVNERR</sequence>
<evidence type="ECO:0000255" key="1">
    <source>
        <dbReference type="HAMAP-Rule" id="MF_00558"/>
    </source>
</evidence>